<gene>
    <name type="primary">napC</name>
    <name type="ordered locus">c2739</name>
</gene>
<protein>
    <recommendedName>
        <fullName>Cytochrome c-type protein NapC</fullName>
    </recommendedName>
</protein>
<organism>
    <name type="scientific">Escherichia coli O6:H1 (strain CFT073 / ATCC 700928 / UPEC)</name>
    <dbReference type="NCBI Taxonomy" id="199310"/>
    <lineage>
        <taxon>Bacteria</taxon>
        <taxon>Pseudomonadati</taxon>
        <taxon>Pseudomonadota</taxon>
        <taxon>Gammaproteobacteria</taxon>
        <taxon>Enterobacterales</taxon>
        <taxon>Enterobacteriaceae</taxon>
        <taxon>Escherichia</taxon>
    </lineage>
</organism>
<feature type="chain" id="PRO_0000108434" description="Cytochrome c-type protein NapC">
    <location>
        <begin position="1"/>
        <end position="200"/>
    </location>
</feature>
<feature type="topological domain" description="Cytoplasmic" evidence="3">
    <location>
        <begin position="1"/>
        <end position="23"/>
    </location>
</feature>
<feature type="transmembrane region" description="Helical" evidence="3">
    <location>
        <begin position="24"/>
        <end position="44"/>
    </location>
</feature>
<feature type="topological domain" description="Periplasmic" evidence="3">
    <location>
        <begin position="45"/>
        <end position="200"/>
    </location>
</feature>
<feature type="binding site" description="covalent" evidence="2">
    <location>
        <position position="57"/>
    </location>
    <ligand>
        <name>heme</name>
        <dbReference type="ChEBI" id="CHEBI:30413"/>
        <label>1</label>
    </ligand>
</feature>
<feature type="binding site" description="covalent" evidence="2">
    <location>
        <position position="60"/>
    </location>
    <ligand>
        <name>heme</name>
        <dbReference type="ChEBI" id="CHEBI:30413"/>
        <label>1</label>
    </ligand>
</feature>
<feature type="binding site" description="axial binding residue" evidence="2">
    <location>
        <position position="63"/>
    </location>
    <ligand>
        <name>heme</name>
        <dbReference type="ChEBI" id="CHEBI:30413"/>
        <label>1</label>
    </ligand>
    <ligandPart>
        <name>Fe</name>
        <dbReference type="ChEBI" id="CHEBI:18248"/>
    </ligandPart>
</feature>
<feature type="binding site" description="covalent" evidence="2">
    <location>
        <position position="87"/>
    </location>
    <ligand>
        <name>heme</name>
        <dbReference type="ChEBI" id="CHEBI:30413"/>
        <label>2</label>
    </ligand>
</feature>
<feature type="binding site" description="covalent" evidence="2">
    <location>
        <position position="90"/>
    </location>
    <ligand>
        <name>heme</name>
        <dbReference type="ChEBI" id="CHEBI:30413"/>
        <label>2</label>
    </ligand>
</feature>
<feature type="binding site" description="axial binding residue" evidence="2">
    <location>
        <position position="91"/>
    </location>
    <ligand>
        <name>heme</name>
        <dbReference type="ChEBI" id="CHEBI:30413"/>
        <label>2</label>
    </ligand>
    <ligandPart>
        <name>Fe</name>
        <dbReference type="ChEBI" id="CHEBI:18248"/>
    </ligandPart>
</feature>
<feature type="binding site" evidence="2">
    <location>
        <position position="103"/>
    </location>
    <ligand>
        <name>substrate</name>
    </ligand>
</feature>
<feature type="binding site" description="axial binding residue" evidence="2">
    <location>
        <position position="109"/>
    </location>
    <ligand>
        <name>heme</name>
        <dbReference type="ChEBI" id="CHEBI:30413"/>
        <label>1</label>
    </ligand>
    <ligandPart>
        <name>Fe</name>
        <dbReference type="ChEBI" id="CHEBI:18248"/>
    </ligandPart>
</feature>
<feature type="binding site" description="covalent" evidence="2">
    <location>
        <position position="147"/>
    </location>
    <ligand>
        <name>heme</name>
        <dbReference type="ChEBI" id="CHEBI:30413"/>
        <label>3</label>
    </ligand>
</feature>
<feature type="binding site" description="covalent" evidence="2">
    <location>
        <position position="150"/>
    </location>
    <ligand>
        <name>heme</name>
        <dbReference type="ChEBI" id="CHEBI:30413"/>
        <label>3</label>
    </ligand>
</feature>
<feature type="binding site" description="axial binding residue" evidence="2">
    <location>
        <position position="151"/>
    </location>
    <ligand>
        <name>heme</name>
        <dbReference type="ChEBI" id="CHEBI:30413"/>
        <label>3</label>
    </ligand>
    <ligandPart>
        <name>Fe</name>
        <dbReference type="ChEBI" id="CHEBI:18248"/>
    </ligandPart>
</feature>
<feature type="binding site" description="covalent" evidence="2">
    <location>
        <position position="179"/>
    </location>
    <ligand>
        <name>heme</name>
        <dbReference type="ChEBI" id="CHEBI:30413"/>
        <label>4</label>
    </ligand>
</feature>
<feature type="binding site" description="covalent" evidence="2">
    <location>
        <position position="182"/>
    </location>
    <ligand>
        <name>heme</name>
        <dbReference type="ChEBI" id="CHEBI:30413"/>
        <label>4</label>
    </ligand>
</feature>
<feature type="binding site" description="axial binding residue" evidence="2">
    <location>
        <position position="183"/>
    </location>
    <ligand>
        <name>heme</name>
        <dbReference type="ChEBI" id="CHEBI:30413"/>
        <label>4</label>
    </ligand>
    <ligandPart>
        <name>Fe</name>
        <dbReference type="ChEBI" id="CHEBI:18248"/>
    </ligandPart>
</feature>
<feature type="binding site" description="axial binding residue" evidence="2">
    <location>
        <position position="188"/>
    </location>
    <ligand>
        <name>heme</name>
        <dbReference type="ChEBI" id="CHEBI:30413"/>
        <label>2</label>
    </ligand>
    <ligandPart>
        <name>Fe</name>
        <dbReference type="ChEBI" id="CHEBI:18248"/>
    </ligandPart>
</feature>
<sequence>MGNSDRKPGLIKRLWKWWRTPSRLALGTLLLIGFVGGIVFWGGFNTGMEKANTEEFCISCHEMRNTVYQEYMDSVHYNNRSGVRATCPDCHVPHEFVPKMIRKLKASKELYGKIFGVIDTPQKFEAHRLTMAQNEWRRMKDNNSQECRNCHNFEYMDTTAQKSVAAKMHDQAVKDGQTCIDCHKGIAHKLPDMREVEPGF</sequence>
<evidence type="ECO:0000250" key="1"/>
<evidence type="ECO:0000250" key="2">
    <source>
        <dbReference type="UniProtKB" id="Q72EF4"/>
    </source>
</evidence>
<evidence type="ECO:0000255" key="3"/>
<evidence type="ECO:0000305" key="4"/>
<comment type="function">
    <text evidence="1">Mediates electron flow from quinones to the NapAB complex.</text>
</comment>
<comment type="subcellular location">
    <subcellularLocation>
        <location>Cell inner membrane</location>
        <topology>Single-pass membrane protein</topology>
    </subcellularLocation>
</comment>
<comment type="PTM">
    <text evidence="4">Binds 4 heme groups per subunit.</text>
</comment>
<comment type="similarity">
    <text evidence="4">Belongs to the NapC/NirT/NrfH family.</text>
</comment>
<keyword id="KW-0997">Cell inner membrane</keyword>
<keyword id="KW-1003">Cell membrane</keyword>
<keyword id="KW-0249">Electron transport</keyword>
<keyword id="KW-0349">Heme</keyword>
<keyword id="KW-0408">Iron</keyword>
<keyword id="KW-0472">Membrane</keyword>
<keyword id="KW-0479">Metal-binding</keyword>
<keyword id="KW-1185">Reference proteome</keyword>
<keyword id="KW-0812">Transmembrane</keyword>
<keyword id="KW-1133">Transmembrane helix</keyword>
<keyword id="KW-0813">Transport</keyword>
<name>NAPC_ECOL6</name>
<proteinExistence type="inferred from homology"/>
<dbReference type="EMBL" id="AE014075">
    <property type="protein sequence ID" value="AAN81193.1"/>
    <property type="molecule type" value="Genomic_DNA"/>
</dbReference>
<dbReference type="RefSeq" id="WP_000528376.1">
    <property type="nucleotide sequence ID" value="NZ_CP051263.1"/>
</dbReference>
<dbReference type="STRING" id="199310.c2739"/>
<dbReference type="GeneID" id="93774976"/>
<dbReference type="KEGG" id="ecc:c2739"/>
<dbReference type="eggNOG" id="COG3005">
    <property type="taxonomic scope" value="Bacteria"/>
</dbReference>
<dbReference type="HOGENOM" id="CLU_096753_2_0_6"/>
<dbReference type="BioCyc" id="ECOL199310:C2739-MONOMER"/>
<dbReference type="Proteomes" id="UP000001410">
    <property type="component" value="Chromosome"/>
</dbReference>
<dbReference type="GO" id="GO:0005886">
    <property type="term" value="C:plasma membrane"/>
    <property type="evidence" value="ECO:0007669"/>
    <property type="project" value="UniProtKB-SubCell"/>
</dbReference>
<dbReference type="GO" id="GO:0009055">
    <property type="term" value="F:electron transfer activity"/>
    <property type="evidence" value="ECO:0007669"/>
    <property type="project" value="TreeGrafter"/>
</dbReference>
<dbReference type="GO" id="GO:0020037">
    <property type="term" value="F:heme binding"/>
    <property type="evidence" value="ECO:0007669"/>
    <property type="project" value="InterPro"/>
</dbReference>
<dbReference type="GO" id="GO:0046872">
    <property type="term" value="F:metal ion binding"/>
    <property type="evidence" value="ECO:0007669"/>
    <property type="project" value="UniProtKB-KW"/>
</dbReference>
<dbReference type="GO" id="GO:0009061">
    <property type="term" value="P:anaerobic respiration"/>
    <property type="evidence" value="ECO:0007669"/>
    <property type="project" value="TreeGrafter"/>
</dbReference>
<dbReference type="GO" id="GO:0019333">
    <property type="term" value="P:denitrification pathway"/>
    <property type="evidence" value="ECO:0007669"/>
    <property type="project" value="InterPro"/>
</dbReference>
<dbReference type="FunFam" id="1.10.3820.10:FF:000001">
    <property type="entry name" value="Cytochrome c-type protein"/>
    <property type="match status" value="1"/>
</dbReference>
<dbReference type="Gene3D" id="1.10.3820.10">
    <property type="entry name" value="Di-heme elbow motif domain"/>
    <property type="match status" value="1"/>
</dbReference>
<dbReference type="InterPro" id="IPR051174">
    <property type="entry name" value="Cytochrome_c-type_ET"/>
</dbReference>
<dbReference type="InterPro" id="IPR036280">
    <property type="entry name" value="Multihaem_cyt_sf"/>
</dbReference>
<dbReference type="InterPro" id="IPR024717">
    <property type="entry name" value="NapC/NirT/NrfH"/>
</dbReference>
<dbReference type="InterPro" id="IPR005126">
    <property type="entry name" value="NapC/NirT_cyt_c_N"/>
</dbReference>
<dbReference type="InterPro" id="IPR038266">
    <property type="entry name" value="NapC/NirT_cytc_sf"/>
</dbReference>
<dbReference type="InterPro" id="IPR011885">
    <property type="entry name" value="NO3Rdtase_cyt_c_NapC/NirT"/>
</dbReference>
<dbReference type="NCBIfam" id="TIGR02161">
    <property type="entry name" value="napC_nirT"/>
    <property type="match status" value="1"/>
</dbReference>
<dbReference type="NCBIfam" id="NF007906">
    <property type="entry name" value="PRK10617.1"/>
    <property type="match status" value="1"/>
</dbReference>
<dbReference type="PANTHER" id="PTHR30333">
    <property type="entry name" value="CYTOCHROME C-TYPE PROTEIN"/>
    <property type="match status" value="1"/>
</dbReference>
<dbReference type="PANTHER" id="PTHR30333:SF1">
    <property type="entry name" value="CYTOCHROME C-TYPE PROTEIN NAPC"/>
    <property type="match status" value="1"/>
</dbReference>
<dbReference type="Pfam" id="PF03264">
    <property type="entry name" value="Cytochrom_NNT"/>
    <property type="match status" value="1"/>
</dbReference>
<dbReference type="PIRSF" id="PIRSF000013">
    <property type="entry name" value="4_hem_cytochrm_NapC"/>
    <property type="match status" value="1"/>
</dbReference>
<dbReference type="SUPFAM" id="SSF48695">
    <property type="entry name" value="Multiheme cytochromes"/>
    <property type="match status" value="1"/>
</dbReference>
<dbReference type="PROSITE" id="PS51008">
    <property type="entry name" value="MULTIHEME_CYTC"/>
    <property type="match status" value="1"/>
</dbReference>
<accession>P0ABL6</accession>
<accession>P33932</accession>
<reference key="1">
    <citation type="journal article" date="2002" name="Proc. Natl. Acad. Sci. U.S.A.">
        <title>Extensive mosaic structure revealed by the complete genome sequence of uropathogenic Escherichia coli.</title>
        <authorList>
            <person name="Welch R.A."/>
            <person name="Burland V."/>
            <person name="Plunkett G. III"/>
            <person name="Redford P."/>
            <person name="Roesch P."/>
            <person name="Rasko D."/>
            <person name="Buckles E.L."/>
            <person name="Liou S.-R."/>
            <person name="Boutin A."/>
            <person name="Hackett J."/>
            <person name="Stroud D."/>
            <person name="Mayhew G.F."/>
            <person name="Rose D.J."/>
            <person name="Zhou S."/>
            <person name="Schwartz D.C."/>
            <person name="Perna N.T."/>
            <person name="Mobley H.L.T."/>
            <person name="Donnenberg M.S."/>
            <person name="Blattner F.R."/>
        </authorList>
    </citation>
    <scope>NUCLEOTIDE SEQUENCE [LARGE SCALE GENOMIC DNA]</scope>
    <source>
        <strain>CFT073 / ATCC 700928 / UPEC</strain>
    </source>
</reference>